<name>Y1658_METSB</name>
<gene>
    <name type="ordered locus">Msil_1658</name>
</gene>
<organism>
    <name type="scientific">Methylocella silvestris (strain DSM 15510 / CIP 108128 / LMG 27833 / NCIMB 13906 / BL2)</name>
    <dbReference type="NCBI Taxonomy" id="395965"/>
    <lineage>
        <taxon>Bacteria</taxon>
        <taxon>Pseudomonadati</taxon>
        <taxon>Pseudomonadota</taxon>
        <taxon>Alphaproteobacteria</taxon>
        <taxon>Hyphomicrobiales</taxon>
        <taxon>Beijerinckiaceae</taxon>
        <taxon>Methylocella</taxon>
    </lineage>
</organism>
<protein>
    <recommendedName>
        <fullName evidence="1">UPF0060 membrane protein Msil_1658</fullName>
    </recommendedName>
</protein>
<dbReference type="EMBL" id="CP001280">
    <property type="protein sequence ID" value="ACK50606.1"/>
    <property type="molecule type" value="Genomic_DNA"/>
</dbReference>
<dbReference type="RefSeq" id="WP_012590676.1">
    <property type="nucleotide sequence ID" value="NC_011666.1"/>
</dbReference>
<dbReference type="SMR" id="B8EK66"/>
<dbReference type="KEGG" id="msl:Msil_1658"/>
<dbReference type="eggNOG" id="COG1742">
    <property type="taxonomic scope" value="Bacteria"/>
</dbReference>
<dbReference type="HOGENOM" id="CLU_117653_1_0_5"/>
<dbReference type="Proteomes" id="UP000002257">
    <property type="component" value="Chromosome"/>
</dbReference>
<dbReference type="GO" id="GO:0005886">
    <property type="term" value="C:plasma membrane"/>
    <property type="evidence" value="ECO:0007669"/>
    <property type="project" value="UniProtKB-SubCell"/>
</dbReference>
<dbReference type="HAMAP" id="MF_00010">
    <property type="entry name" value="UPF0060"/>
    <property type="match status" value="1"/>
</dbReference>
<dbReference type="InterPro" id="IPR003844">
    <property type="entry name" value="UPF0060"/>
</dbReference>
<dbReference type="NCBIfam" id="NF002586">
    <property type="entry name" value="PRK02237.1"/>
    <property type="match status" value="1"/>
</dbReference>
<dbReference type="PANTHER" id="PTHR36116">
    <property type="entry name" value="UPF0060 MEMBRANE PROTEIN YNFA"/>
    <property type="match status" value="1"/>
</dbReference>
<dbReference type="PANTHER" id="PTHR36116:SF1">
    <property type="entry name" value="UPF0060 MEMBRANE PROTEIN YNFA"/>
    <property type="match status" value="1"/>
</dbReference>
<dbReference type="Pfam" id="PF02694">
    <property type="entry name" value="UPF0060"/>
    <property type="match status" value="1"/>
</dbReference>
<dbReference type="SUPFAM" id="SSF103481">
    <property type="entry name" value="Multidrug resistance efflux transporter EmrE"/>
    <property type="match status" value="1"/>
</dbReference>
<reference key="1">
    <citation type="journal article" date="2010" name="J. Bacteriol.">
        <title>Complete genome sequence of the aerobic facultative methanotroph Methylocella silvestris BL2.</title>
        <authorList>
            <person name="Chen Y."/>
            <person name="Crombie A."/>
            <person name="Rahman M.T."/>
            <person name="Dedysh S.N."/>
            <person name="Liesack W."/>
            <person name="Stott M.B."/>
            <person name="Alam M."/>
            <person name="Theisen A.R."/>
            <person name="Murrell J.C."/>
            <person name="Dunfield P.F."/>
        </authorList>
    </citation>
    <scope>NUCLEOTIDE SEQUENCE [LARGE SCALE GENOMIC DNA]</scope>
    <source>
        <strain>DSM 15510 / CIP 108128 / LMG 27833 / NCIMB 13906 / BL2</strain>
    </source>
</reference>
<sequence length="108" mass="11585">MLTALVYVAAALAEIAGCFSFWAWLRLGKSSLWLIPGTASLLLFAWLLTLIDVSAAGRAYAAYGGVYVTVSLLWLWAMEGVWPDRWDLGGATLCLIGAAIIILAPRPA</sequence>
<proteinExistence type="inferred from homology"/>
<feature type="chain" id="PRO_1000197496" description="UPF0060 membrane protein Msil_1658">
    <location>
        <begin position="1"/>
        <end position="108"/>
    </location>
</feature>
<feature type="transmembrane region" description="Helical" evidence="1">
    <location>
        <begin position="5"/>
        <end position="25"/>
    </location>
</feature>
<feature type="transmembrane region" description="Helical" evidence="1">
    <location>
        <begin position="31"/>
        <end position="51"/>
    </location>
</feature>
<feature type="transmembrane region" description="Helical" evidence="1">
    <location>
        <begin position="62"/>
        <end position="82"/>
    </location>
</feature>
<feature type="transmembrane region" description="Helical" evidence="1">
    <location>
        <begin position="88"/>
        <end position="108"/>
    </location>
</feature>
<evidence type="ECO:0000255" key="1">
    <source>
        <dbReference type="HAMAP-Rule" id="MF_00010"/>
    </source>
</evidence>
<keyword id="KW-0997">Cell inner membrane</keyword>
<keyword id="KW-1003">Cell membrane</keyword>
<keyword id="KW-0472">Membrane</keyword>
<keyword id="KW-1185">Reference proteome</keyword>
<keyword id="KW-0812">Transmembrane</keyword>
<keyword id="KW-1133">Transmembrane helix</keyword>
<accession>B8EK66</accession>
<comment type="subcellular location">
    <subcellularLocation>
        <location evidence="1">Cell inner membrane</location>
        <topology evidence="1">Multi-pass membrane protein</topology>
    </subcellularLocation>
</comment>
<comment type="similarity">
    <text evidence="1">Belongs to the UPF0060 family.</text>
</comment>